<evidence type="ECO:0000255" key="1">
    <source>
        <dbReference type="HAMAP-Rule" id="MF_00150"/>
    </source>
</evidence>
<proteinExistence type="inferred from homology"/>
<keyword id="KW-0028">Amino-acid biosynthesis</keyword>
<keyword id="KW-0055">Arginine biosynthesis</keyword>
<keyword id="KW-0963">Cytoplasm</keyword>
<keyword id="KW-0521">NADP</keyword>
<keyword id="KW-0560">Oxidoreductase</keyword>
<reference key="1">
    <citation type="submission" date="2007-05" db="EMBL/GenBank/DDBJ databases">
        <title>Complete sequence of Dehalococcoides sp. BAV1.</title>
        <authorList>
            <consortium name="US DOE Joint Genome Institute"/>
            <person name="Copeland A."/>
            <person name="Lucas S."/>
            <person name="Lapidus A."/>
            <person name="Barry K."/>
            <person name="Detter J.C."/>
            <person name="Glavina del Rio T."/>
            <person name="Hammon N."/>
            <person name="Israni S."/>
            <person name="Pitluck S."/>
            <person name="Lowry S."/>
            <person name="Clum A."/>
            <person name="Schmutz J."/>
            <person name="Larimer F."/>
            <person name="Land M."/>
            <person name="Hauser L."/>
            <person name="Kyrpides N."/>
            <person name="Kim E."/>
            <person name="Ritalahti K.M."/>
            <person name="Loeffler F."/>
            <person name="Richardson P."/>
        </authorList>
    </citation>
    <scope>NUCLEOTIDE SEQUENCE [LARGE SCALE GENOMIC DNA]</scope>
    <source>
        <strain>ATCC BAA-2100 / JCM 16839 / KCTC 5957 / BAV1</strain>
    </source>
</reference>
<organism>
    <name type="scientific">Dehalococcoides mccartyi (strain ATCC BAA-2100 / JCM 16839 / KCTC 5957 / BAV1)</name>
    <dbReference type="NCBI Taxonomy" id="216389"/>
    <lineage>
        <taxon>Bacteria</taxon>
        <taxon>Bacillati</taxon>
        <taxon>Chloroflexota</taxon>
        <taxon>Dehalococcoidia</taxon>
        <taxon>Dehalococcoidales</taxon>
        <taxon>Dehalococcoidaceae</taxon>
        <taxon>Dehalococcoides</taxon>
    </lineage>
</organism>
<comment type="function">
    <text evidence="1">Catalyzes the NADPH-dependent reduction of N-acetyl-5-glutamyl phosphate to yield N-acetyl-L-glutamate 5-semialdehyde.</text>
</comment>
<comment type="catalytic activity">
    <reaction evidence="1">
        <text>N-acetyl-L-glutamate 5-semialdehyde + phosphate + NADP(+) = N-acetyl-L-glutamyl 5-phosphate + NADPH + H(+)</text>
        <dbReference type="Rhea" id="RHEA:21588"/>
        <dbReference type="ChEBI" id="CHEBI:15378"/>
        <dbReference type="ChEBI" id="CHEBI:29123"/>
        <dbReference type="ChEBI" id="CHEBI:43474"/>
        <dbReference type="ChEBI" id="CHEBI:57783"/>
        <dbReference type="ChEBI" id="CHEBI:57936"/>
        <dbReference type="ChEBI" id="CHEBI:58349"/>
        <dbReference type="EC" id="1.2.1.38"/>
    </reaction>
</comment>
<comment type="pathway">
    <text evidence="1">Amino-acid biosynthesis; L-arginine biosynthesis; N(2)-acetyl-L-ornithine from L-glutamate: step 3/4.</text>
</comment>
<comment type="subcellular location">
    <subcellularLocation>
        <location evidence="1">Cytoplasm</location>
    </subcellularLocation>
</comment>
<comment type="similarity">
    <text evidence="1">Belongs to the NAGSA dehydrogenase family. Type 1 subfamily.</text>
</comment>
<name>ARGC_DEHMB</name>
<sequence length="341" mass="37152">MKKYKAGIINVTGYAGLELARILESHPSVELCSVTGRSLAGKKLSDVFPYLHRLDLPITENLEGQVDVAFLALPHKEGAALVPALLEKGMRVIDISADFRLKDPALYQAWYGFEHPCPGLLEEAVYGLPELKRKDIAGARLVANPGCYPTSAILGLVPAFKSDLIEPSAIIDAKSGLSGSGRTPTVKTIFCEADEDVCAYSIGTHRHQPEIAQELCRASGGVIPRVTFCPHLVPMSRGILSTAYARLKQPVTDEEVKEIYRQFYKDEPFVKVTAEPPHTRYTRGTNMCFIYPVVDALNEQLIVISCIDNLVKGAAGQAVQNMNIMLGLAETEGLEAMATLP</sequence>
<accession>A5FPC2</accession>
<feature type="chain" id="PRO_1000118057" description="N-acetyl-gamma-glutamyl-phosphate reductase">
    <location>
        <begin position="1"/>
        <end position="341"/>
    </location>
</feature>
<feature type="active site" evidence="1">
    <location>
        <position position="147"/>
    </location>
</feature>
<gene>
    <name evidence="1" type="primary">argC</name>
    <name type="ordered locus">DehaBAV1_1371</name>
</gene>
<protein>
    <recommendedName>
        <fullName evidence="1">N-acetyl-gamma-glutamyl-phosphate reductase</fullName>
        <shortName evidence="1">AGPR</shortName>
        <ecNumber evidence="1">1.2.1.38</ecNumber>
    </recommendedName>
    <alternativeName>
        <fullName evidence="1">N-acetyl-glutamate semialdehyde dehydrogenase</fullName>
        <shortName evidence="1">NAGSA dehydrogenase</shortName>
    </alternativeName>
</protein>
<dbReference type="EC" id="1.2.1.38" evidence="1"/>
<dbReference type="EMBL" id="CP000688">
    <property type="protein sequence ID" value="ABQ17948.1"/>
    <property type="molecule type" value="Genomic_DNA"/>
</dbReference>
<dbReference type="SMR" id="A5FPC2"/>
<dbReference type="KEGG" id="deb:DehaBAV1_1371"/>
<dbReference type="PATRIC" id="fig|216389.18.peg.1444"/>
<dbReference type="HOGENOM" id="CLU_006384_0_1_0"/>
<dbReference type="UniPathway" id="UPA00068">
    <property type="reaction ID" value="UER00108"/>
</dbReference>
<dbReference type="GO" id="GO:0005737">
    <property type="term" value="C:cytoplasm"/>
    <property type="evidence" value="ECO:0007669"/>
    <property type="project" value="UniProtKB-SubCell"/>
</dbReference>
<dbReference type="GO" id="GO:0003942">
    <property type="term" value="F:N-acetyl-gamma-glutamyl-phosphate reductase activity"/>
    <property type="evidence" value="ECO:0007669"/>
    <property type="project" value="UniProtKB-UniRule"/>
</dbReference>
<dbReference type="GO" id="GO:0051287">
    <property type="term" value="F:NAD binding"/>
    <property type="evidence" value="ECO:0007669"/>
    <property type="project" value="InterPro"/>
</dbReference>
<dbReference type="GO" id="GO:0070401">
    <property type="term" value="F:NADP+ binding"/>
    <property type="evidence" value="ECO:0007669"/>
    <property type="project" value="InterPro"/>
</dbReference>
<dbReference type="GO" id="GO:0006526">
    <property type="term" value="P:L-arginine biosynthetic process"/>
    <property type="evidence" value="ECO:0007669"/>
    <property type="project" value="UniProtKB-UniRule"/>
</dbReference>
<dbReference type="CDD" id="cd23934">
    <property type="entry name" value="AGPR_1_C"/>
    <property type="match status" value="1"/>
</dbReference>
<dbReference type="CDD" id="cd17895">
    <property type="entry name" value="AGPR_1_N"/>
    <property type="match status" value="1"/>
</dbReference>
<dbReference type="FunFam" id="3.30.360.10:FF:000014">
    <property type="entry name" value="N-acetyl-gamma-glutamyl-phosphate reductase"/>
    <property type="match status" value="1"/>
</dbReference>
<dbReference type="Gene3D" id="3.30.360.10">
    <property type="entry name" value="Dihydrodipicolinate Reductase, domain 2"/>
    <property type="match status" value="1"/>
</dbReference>
<dbReference type="Gene3D" id="3.40.50.720">
    <property type="entry name" value="NAD(P)-binding Rossmann-like Domain"/>
    <property type="match status" value="1"/>
</dbReference>
<dbReference type="HAMAP" id="MF_00150">
    <property type="entry name" value="ArgC_type1"/>
    <property type="match status" value="1"/>
</dbReference>
<dbReference type="InterPro" id="IPR023013">
    <property type="entry name" value="AGPR_AS"/>
</dbReference>
<dbReference type="InterPro" id="IPR000706">
    <property type="entry name" value="AGPR_type-1"/>
</dbReference>
<dbReference type="InterPro" id="IPR036291">
    <property type="entry name" value="NAD(P)-bd_dom_sf"/>
</dbReference>
<dbReference type="InterPro" id="IPR050085">
    <property type="entry name" value="NAGSA_dehydrogenase"/>
</dbReference>
<dbReference type="InterPro" id="IPR000534">
    <property type="entry name" value="Semialdehyde_DH_NAD-bd"/>
</dbReference>
<dbReference type="NCBIfam" id="TIGR01850">
    <property type="entry name" value="argC"/>
    <property type="match status" value="1"/>
</dbReference>
<dbReference type="PANTHER" id="PTHR32338:SF10">
    <property type="entry name" value="N-ACETYL-GAMMA-GLUTAMYL-PHOSPHATE REDUCTASE, CHLOROPLASTIC-RELATED"/>
    <property type="match status" value="1"/>
</dbReference>
<dbReference type="PANTHER" id="PTHR32338">
    <property type="entry name" value="N-ACETYL-GAMMA-GLUTAMYL-PHOSPHATE REDUCTASE, CHLOROPLASTIC-RELATED-RELATED"/>
    <property type="match status" value="1"/>
</dbReference>
<dbReference type="Pfam" id="PF01118">
    <property type="entry name" value="Semialdhyde_dh"/>
    <property type="match status" value="1"/>
</dbReference>
<dbReference type="Pfam" id="PF22698">
    <property type="entry name" value="Semialdhyde_dhC_1"/>
    <property type="match status" value="1"/>
</dbReference>
<dbReference type="SMART" id="SM00859">
    <property type="entry name" value="Semialdhyde_dh"/>
    <property type="match status" value="1"/>
</dbReference>
<dbReference type="SUPFAM" id="SSF55347">
    <property type="entry name" value="Glyceraldehyde-3-phosphate dehydrogenase-like, C-terminal domain"/>
    <property type="match status" value="1"/>
</dbReference>
<dbReference type="SUPFAM" id="SSF51735">
    <property type="entry name" value="NAD(P)-binding Rossmann-fold domains"/>
    <property type="match status" value="1"/>
</dbReference>
<dbReference type="PROSITE" id="PS01224">
    <property type="entry name" value="ARGC"/>
    <property type="match status" value="1"/>
</dbReference>